<name>FCTA_RHOPB</name>
<feature type="chain" id="PRO_0000300991" description="Formyl-CoA:oxalate CoA-transferase">
    <location>
        <begin position="1"/>
        <end position="426"/>
    </location>
</feature>
<feature type="active site" description="Nucleophile" evidence="2">
    <location>
        <position position="168"/>
    </location>
</feature>
<feature type="binding site" evidence="1">
    <location>
        <begin position="17"/>
        <end position="18"/>
    </location>
    <ligand>
        <name>CoA</name>
        <dbReference type="ChEBI" id="CHEBI:57287"/>
    </ligand>
</feature>
<feature type="binding site" evidence="2">
    <location>
        <position position="38"/>
    </location>
    <ligand>
        <name>CoA</name>
        <dbReference type="ChEBI" id="CHEBI:57287"/>
    </ligand>
</feature>
<feature type="binding site" evidence="1">
    <location>
        <begin position="72"/>
        <end position="75"/>
    </location>
    <ligand>
        <name>CoA</name>
        <dbReference type="ChEBI" id="CHEBI:57287"/>
    </ligand>
</feature>
<feature type="binding site" evidence="1">
    <location>
        <begin position="96"/>
        <end position="98"/>
    </location>
    <ligand>
        <name>CoA</name>
        <dbReference type="ChEBI" id="CHEBI:57287"/>
    </ligand>
</feature>
<feature type="binding site" evidence="2">
    <location>
        <position position="104"/>
    </location>
    <ligand>
        <name>CoA</name>
        <dbReference type="ChEBI" id="CHEBI:57287"/>
    </ligand>
</feature>
<feature type="binding site" evidence="1">
    <location>
        <begin position="136"/>
        <end position="139"/>
    </location>
    <ligand>
        <name>CoA</name>
        <dbReference type="ChEBI" id="CHEBI:57287"/>
    </ligand>
</feature>
<feature type="binding site" evidence="1">
    <location>
        <begin position="247"/>
        <end position="249"/>
    </location>
    <ligand>
        <name>substrate</name>
    </ligand>
</feature>
<protein>
    <recommendedName>
        <fullName>Formyl-CoA:oxalate CoA-transferase</fullName>
        <shortName>FCOCT</shortName>
        <ecNumber evidence="2">2.8.3.16</ecNumber>
    </recommendedName>
    <alternativeName>
        <fullName evidence="2">Formyl-coenzyme A transferase</fullName>
        <shortName evidence="2">Formyl-CoA transferase</shortName>
    </alternativeName>
</protein>
<dbReference type="EC" id="2.8.3.16" evidence="2"/>
<dbReference type="EMBL" id="CP000301">
    <property type="protein sequence ID" value="ABD87413.1"/>
    <property type="molecule type" value="Genomic_DNA"/>
</dbReference>
<dbReference type="SMR" id="Q217M3"/>
<dbReference type="STRING" id="316056.RPC_1854"/>
<dbReference type="KEGG" id="rpc:RPC_1854"/>
<dbReference type="eggNOG" id="COG1804">
    <property type="taxonomic scope" value="Bacteria"/>
</dbReference>
<dbReference type="HOGENOM" id="CLU_033975_2_1_5"/>
<dbReference type="OrthoDB" id="9806585at2"/>
<dbReference type="UniPathway" id="UPA00540">
    <property type="reaction ID" value="UER00598"/>
</dbReference>
<dbReference type="GO" id="GO:0033608">
    <property type="term" value="F:formyl-CoA transferase activity"/>
    <property type="evidence" value="ECO:0007669"/>
    <property type="project" value="UniProtKB-EC"/>
</dbReference>
<dbReference type="GO" id="GO:0033611">
    <property type="term" value="P:oxalate catabolic process"/>
    <property type="evidence" value="ECO:0007669"/>
    <property type="project" value="UniProtKB-UniRule"/>
</dbReference>
<dbReference type="Gene3D" id="3.40.50.10540">
    <property type="entry name" value="Crotonobetainyl-coa:carnitine coa-transferase, domain 1"/>
    <property type="match status" value="1"/>
</dbReference>
<dbReference type="Gene3D" id="3.30.1540.10">
    <property type="entry name" value="formyl-coa transferase, domain 3"/>
    <property type="match status" value="1"/>
</dbReference>
<dbReference type="HAMAP" id="MF_00742">
    <property type="entry name" value="Formyl_CoA_transfer"/>
    <property type="match status" value="1"/>
</dbReference>
<dbReference type="InterPro" id="IPR050483">
    <property type="entry name" value="CoA-transferase_III_domain"/>
</dbReference>
<dbReference type="InterPro" id="IPR003673">
    <property type="entry name" value="CoA-Trfase_fam_III"/>
</dbReference>
<dbReference type="InterPro" id="IPR044855">
    <property type="entry name" value="CoA-Trfase_III_dom3_sf"/>
</dbReference>
<dbReference type="InterPro" id="IPR023606">
    <property type="entry name" value="CoA-Trfase_III_dom_1_sf"/>
</dbReference>
<dbReference type="InterPro" id="IPR017659">
    <property type="entry name" value="Formyl_CoA_transfer"/>
</dbReference>
<dbReference type="NCBIfam" id="TIGR03253">
    <property type="entry name" value="oxalate_frc"/>
    <property type="match status" value="1"/>
</dbReference>
<dbReference type="NCBIfam" id="NF003809">
    <property type="entry name" value="PRK05398.1"/>
    <property type="match status" value="1"/>
</dbReference>
<dbReference type="PANTHER" id="PTHR48207">
    <property type="entry name" value="SUCCINATE--HYDROXYMETHYLGLUTARATE COA-TRANSFERASE"/>
    <property type="match status" value="1"/>
</dbReference>
<dbReference type="PANTHER" id="PTHR48207:SF3">
    <property type="entry name" value="SUCCINATE--HYDROXYMETHYLGLUTARATE COA-TRANSFERASE"/>
    <property type="match status" value="1"/>
</dbReference>
<dbReference type="Pfam" id="PF02515">
    <property type="entry name" value="CoA_transf_3"/>
    <property type="match status" value="1"/>
</dbReference>
<dbReference type="SUPFAM" id="SSF89796">
    <property type="entry name" value="CoA-transferase family III (CaiB/BaiF)"/>
    <property type="match status" value="1"/>
</dbReference>
<keyword id="KW-0808">Transferase</keyword>
<reference key="1">
    <citation type="submission" date="2006-03" db="EMBL/GenBank/DDBJ databases">
        <title>Complete sequence of Rhodopseudomonas palustris BisB18.</title>
        <authorList>
            <consortium name="US DOE Joint Genome Institute"/>
            <person name="Copeland A."/>
            <person name="Lucas S."/>
            <person name="Lapidus A."/>
            <person name="Barry K."/>
            <person name="Detter J.C."/>
            <person name="Glavina del Rio T."/>
            <person name="Hammon N."/>
            <person name="Israni S."/>
            <person name="Dalin E."/>
            <person name="Tice H."/>
            <person name="Pitluck S."/>
            <person name="Chain P."/>
            <person name="Malfatti S."/>
            <person name="Shin M."/>
            <person name="Vergez L."/>
            <person name="Schmutz J."/>
            <person name="Larimer F."/>
            <person name="Land M."/>
            <person name="Hauser L."/>
            <person name="Pelletier D.A."/>
            <person name="Kyrpides N."/>
            <person name="Anderson I."/>
            <person name="Oda Y."/>
            <person name="Harwood C.S."/>
            <person name="Richardson P."/>
        </authorList>
    </citation>
    <scope>NUCLEOTIDE SEQUENCE [LARGE SCALE GENOMIC DNA]</scope>
    <source>
        <strain>BisB18</strain>
    </source>
</reference>
<evidence type="ECO:0000250" key="1"/>
<evidence type="ECO:0000255" key="2">
    <source>
        <dbReference type="HAMAP-Rule" id="MF_00742"/>
    </source>
</evidence>
<proteinExistence type="inferred from homology"/>
<sequence>MTKALNGVRILDFTHVQSGPTCTQLLAWFGADVIKVERPGVGDITRGQLQDIPNVDSLYFTMLNHNKRSITLDTKNPKGKEVLTALIKSCDVLVENFGPGVLDRMGFSWEKIQSLNPKMIVASIKGFGPGPYEDCKVYENVAQCTGGAASTTGFRDGLPLVTGAQIGDSGTGLHLALGIVTALYQRTVTGRGQKVTAAMQDGVLNLSRVKLRDQQRLAHGPLKEYSQFGEGIPFGDAVPRAGNDSGGGQPGRILKCKGWETDPNAYIYFITQAPVWEKICDVIGEPDWKTHPDYAKPAARLKHLNDIFARIEQWTMTKTKFEAMDILNKDDIPCGPILSMKELAEDQSLRATGTVVEVDHPTRGKYLSVGNPIKMSDSPTEVMRSPLLGEHTDEILRQVLGFSDQQVAEVHDSGALEPPRKAAAAE</sequence>
<accession>Q217M3</accession>
<comment type="function">
    <text evidence="1">Involved in the catabolism of oxalate and in the adapatation to low pH via the induction of the oxalate-dependent acid tolerance response (ATR). Catalyzes the transfer of the CoA moiety from formyl-CoA to oxalate (By similarity).</text>
</comment>
<comment type="catalytic activity">
    <reaction evidence="2">
        <text>formyl-CoA + oxalate = oxalyl-CoA + formate</text>
        <dbReference type="Rhea" id="RHEA:16545"/>
        <dbReference type="ChEBI" id="CHEBI:15740"/>
        <dbReference type="ChEBI" id="CHEBI:30623"/>
        <dbReference type="ChEBI" id="CHEBI:57376"/>
        <dbReference type="ChEBI" id="CHEBI:57388"/>
        <dbReference type="EC" id="2.8.3.16"/>
    </reaction>
</comment>
<comment type="pathway">
    <text evidence="2">Metabolic intermediate degradation; oxalate degradation; CO(2) and formate from oxalate: step 1/2.</text>
</comment>
<comment type="subunit">
    <text evidence="2">Homodimer.</text>
</comment>
<comment type="similarity">
    <text evidence="2">Belongs to the CoA-transferase III family. Frc subfamily.</text>
</comment>
<organism>
    <name type="scientific">Rhodopseudomonas palustris (strain BisB18)</name>
    <dbReference type="NCBI Taxonomy" id="316056"/>
    <lineage>
        <taxon>Bacteria</taxon>
        <taxon>Pseudomonadati</taxon>
        <taxon>Pseudomonadota</taxon>
        <taxon>Alphaproteobacteria</taxon>
        <taxon>Hyphomicrobiales</taxon>
        <taxon>Nitrobacteraceae</taxon>
        <taxon>Rhodopseudomonas</taxon>
    </lineage>
</organism>
<gene>
    <name evidence="2" type="primary">frc</name>
    <name type="ordered locus">RPC_1854</name>
</gene>